<protein>
    <recommendedName>
        <fullName evidence="1">Phosphatidylglycerol--prolipoprotein diacylglyceryl transferase</fullName>
        <ecNumber evidence="1">2.5.1.145</ecNumber>
    </recommendedName>
</protein>
<gene>
    <name evidence="1" type="primary">lgt</name>
    <name type="ordered locus">SPC_3060</name>
</gene>
<comment type="function">
    <text evidence="1">Catalyzes the transfer of the diacylglyceryl group from phosphatidylglycerol to the sulfhydryl group of the N-terminal cysteine of a prolipoprotein, the first step in the formation of mature lipoproteins.</text>
</comment>
<comment type="catalytic activity">
    <reaction evidence="1">
        <text>L-cysteinyl-[prolipoprotein] + a 1,2-diacyl-sn-glycero-3-phospho-(1'-sn-glycerol) = an S-1,2-diacyl-sn-glyceryl-L-cysteinyl-[prolipoprotein] + sn-glycerol 1-phosphate + H(+)</text>
        <dbReference type="Rhea" id="RHEA:56712"/>
        <dbReference type="Rhea" id="RHEA-COMP:14679"/>
        <dbReference type="Rhea" id="RHEA-COMP:14680"/>
        <dbReference type="ChEBI" id="CHEBI:15378"/>
        <dbReference type="ChEBI" id="CHEBI:29950"/>
        <dbReference type="ChEBI" id="CHEBI:57685"/>
        <dbReference type="ChEBI" id="CHEBI:64716"/>
        <dbReference type="ChEBI" id="CHEBI:140658"/>
        <dbReference type="EC" id="2.5.1.145"/>
    </reaction>
</comment>
<comment type="pathway">
    <text evidence="1">Protein modification; lipoprotein biosynthesis (diacylglyceryl transfer).</text>
</comment>
<comment type="subcellular location">
    <subcellularLocation>
        <location evidence="1">Cell inner membrane</location>
        <topology evidence="1">Multi-pass membrane protein</topology>
    </subcellularLocation>
</comment>
<comment type="similarity">
    <text evidence="1">Belongs to the Lgt family.</text>
</comment>
<keyword id="KW-0997">Cell inner membrane</keyword>
<keyword id="KW-1003">Cell membrane</keyword>
<keyword id="KW-0472">Membrane</keyword>
<keyword id="KW-0808">Transferase</keyword>
<keyword id="KW-0812">Transmembrane</keyword>
<keyword id="KW-1133">Transmembrane helix</keyword>
<sequence>MTSSYLHFPDFDPVIFSIGPVALHWYGLMYLVGFVFAMWLAVRRANRPGSGWTKNEVENLLYAGFLGVFLGGRIGYVLFYNFPLFLDNPLYLFRVWDGGMSFHGGLIGVILVMIIFARRTKRSFFQVSDFIAPLIPFGLGAGRLGNFINGELWGRVDPDFRFAMLFPGSRAEDIALLPSHPQWQPIFDTYGVLPRHPSQLYELALEGVVLFIILNLFIRKPRPMGAVSGLFLIGYGAFRIIVEFFRQPDAQFTGAWVQYISMGQILSIPMIIAGAIMMVWAYRRRPQQHVS</sequence>
<dbReference type="EC" id="2.5.1.145" evidence="1"/>
<dbReference type="EMBL" id="CP000857">
    <property type="protein sequence ID" value="ACN47148.1"/>
    <property type="molecule type" value="Genomic_DNA"/>
</dbReference>
<dbReference type="RefSeq" id="WP_000204645.1">
    <property type="nucleotide sequence ID" value="NC_012125.1"/>
</dbReference>
<dbReference type="SMR" id="C0PXJ0"/>
<dbReference type="KEGG" id="sei:SPC_3060"/>
<dbReference type="HOGENOM" id="CLU_013386_1_0_6"/>
<dbReference type="UniPathway" id="UPA00664"/>
<dbReference type="Proteomes" id="UP000001599">
    <property type="component" value="Chromosome"/>
</dbReference>
<dbReference type="GO" id="GO:0005886">
    <property type="term" value="C:plasma membrane"/>
    <property type="evidence" value="ECO:0007669"/>
    <property type="project" value="UniProtKB-SubCell"/>
</dbReference>
<dbReference type="GO" id="GO:0008961">
    <property type="term" value="F:phosphatidylglycerol-prolipoprotein diacylglyceryl transferase activity"/>
    <property type="evidence" value="ECO:0007669"/>
    <property type="project" value="UniProtKB-UniRule"/>
</dbReference>
<dbReference type="GO" id="GO:0042158">
    <property type="term" value="P:lipoprotein biosynthetic process"/>
    <property type="evidence" value="ECO:0007669"/>
    <property type="project" value="UniProtKB-UniRule"/>
</dbReference>
<dbReference type="HAMAP" id="MF_01147">
    <property type="entry name" value="Lgt"/>
    <property type="match status" value="1"/>
</dbReference>
<dbReference type="InterPro" id="IPR001640">
    <property type="entry name" value="Lgt"/>
</dbReference>
<dbReference type="NCBIfam" id="TIGR00544">
    <property type="entry name" value="lgt"/>
    <property type="match status" value="1"/>
</dbReference>
<dbReference type="PANTHER" id="PTHR30589:SF0">
    <property type="entry name" value="PHOSPHATIDYLGLYCEROL--PROLIPOPROTEIN DIACYLGLYCERYL TRANSFERASE"/>
    <property type="match status" value="1"/>
</dbReference>
<dbReference type="PANTHER" id="PTHR30589">
    <property type="entry name" value="PROLIPOPROTEIN DIACYLGLYCERYL TRANSFERASE"/>
    <property type="match status" value="1"/>
</dbReference>
<dbReference type="Pfam" id="PF01790">
    <property type="entry name" value="LGT"/>
    <property type="match status" value="1"/>
</dbReference>
<dbReference type="PROSITE" id="PS01311">
    <property type="entry name" value="LGT"/>
    <property type="match status" value="1"/>
</dbReference>
<accession>C0PXJ0</accession>
<feature type="chain" id="PRO_1000164147" description="Phosphatidylglycerol--prolipoprotein diacylglyceryl transferase">
    <location>
        <begin position="1"/>
        <end position="291"/>
    </location>
</feature>
<feature type="transmembrane region" description="Helical" evidence="1">
    <location>
        <begin position="21"/>
        <end position="41"/>
    </location>
</feature>
<feature type="transmembrane region" description="Helical" evidence="1">
    <location>
        <begin position="60"/>
        <end position="80"/>
    </location>
</feature>
<feature type="transmembrane region" description="Helical" evidence="1">
    <location>
        <begin position="96"/>
        <end position="116"/>
    </location>
</feature>
<feature type="transmembrane region" description="Helical" evidence="1">
    <location>
        <begin position="130"/>
        <end position="150"/>
    </location>
</feature>
<feature type="transmembrane region" description="Helical" evidence="1">
    <location>
        <begin position="198"/>
        <end position="218"/>
    </location>
</feature>
<feature type="transmembrane region" description="Helical" evidence="1">
    <location>
        <begin position="225"/>
        <end position="245"/>
    </location>
</feature>
<feature type="transmembrane region" description="Helical" evidence="1">
    <location>
        <begin position="260"/>
        <end position="280"/>
    </location>
</feature>
<feature type="binding site" evidence="1">
    <location>
        <position position="143"/>
    </location>
    <ligand>
        <name>a 1,2-diacyl-sn-glycero-3-phospho-(1'-sn-glycerol)</name>
        <dbReference type="ChEBI" id="CHEBI:64716"/>
    </ligand>
</feature>
<name>LGT_SALPC</name>
<organism>
    <name type="scientific">Salmonella paratyphi C (strain RKS4594)</name>
    <dbReference type="NCBI Taxonomy" id="476213"/>
    <lineage>
        <taxon>Bacteria</taxon>
        <taxon>Pseudomonadati</taxon>
        <taxon>Pseudomonadota</taxon>
        <taxon>Gammaproteobacteria</taxon>
        <taxon>Enterobacterales</taxon>
        <taxon>Enterobacteriaceae</taxon>
        <taxon>Salmonella</taxon>
    </lineage>
</organism>
<proteinExistence type="inferred from homology"/>
<evidence type="ECO:0000255" key="1">
    <source>
        <dbReference type="HAMAP-Rule" id="MF_01147"/>
    </source>
</evidence>
<reference key="1">
    <citation type="journal article" date="2009" name="PLoS ONE">
        <title>Salmonella paratyphi C: genetic divergence from Salmonella choleraesuis and pathogenic convergence with Salmonella typhi.</title>
        <authorList>
            <person name="Liu W.-Q."/>
            <person name="Feng Y."/>
            <person name="Wang Y."/>
            <person name="Zou Q.-H."/>
            <person name="Chen F."/>
            <person name="Guo J.-T."/>
            <person name="Peng Y.-H."/>
            <person name="Jin Y."/>
            <person name="Li Y.-G."/>
            <person name="Hu S.-N."/>
            <person name="Johnston R.N."/>
            <person name="Liu G.-R."/>
            <person name="Liu S.-L."/>
        </authorList>
    </citation>
    <scope>NUCLEOTIDE SEQUENCE [LARGE SCALE GENOMIC DNA]</scope>
    <source>
        <strain>RKS4594</strain>
    </source>
</reference>